<reference key="1">
    <citation type="journal article" date="2002" name="Proc. Natl. Acad. Sci. U.S.A.">
        <title>Extensive mosaic structure revealed by the complete genome sequence of uropathogenic Escherichia coli.</title>
        <authorList>
            <person name="Welch R.A."/>
            <person name="Burland V."/>
            <person name="Plunkett G. III"/>
            <person name="Redford P."/>
            <person name="Roesch P."/>
            <person name="Rasko D."/>
            <person name="Buckles E.L."/>
            <person name="Liou S.-R."/>
            <person name="Boutin A."/>
            <person name="Hackett J."/>
            <person name="Stroud D."/>
            <person name="Mayhew G.F."/>
            <person name="Rose D.J."/>
            <person name="Zhou S."/>
            <person name="Schwartz D.C."/>
            <person name="Perna N.T."/>
            <person name="Mobley H.L.T."/>
            <person name="Donnenberg M.S."/>
            <person name="Blattner F.R."/>
        </authorList>
    </citation>
    <scope>NUCLEOTIDE SEQUENCE [LARGE SCALE GENOMIC DNA]</scope>
    <source>
        <strain>CFT073 / ATCC 700928 / UPEC</strain>
    </source>
</reference>
<evidence type="ECO:0000250" key="1">
    <source>
        <dbReference type="UniProtKB" id="P0AGI1"/>
    </source>
</evidence>
<evidence type="ECO:0000305" key="2"/>
<feature type="chain" id="PRO_0000060225" description="Ribose import permease protein RbsC">
    <location>
        <begin position="1"/>
        <end position="321"/>
    </location>
</feature>
<feature type="topological domain" description="Cytoplasmic" evidence="1">
    <location>
        <begin position="1"/>
        <end position="22"/>
    </location>
</feature>
<feature type="transmembrane region" description="Helical" evidence="1">
    <location>
        <begin position="23"/>
        <end position="43"/>
    </location>
</feature>
<feature type="topological domain" description="Periplasmic" evidence="1">
    <location>
        <begin position="44"/>
        <end position="56"/>
    </location>
</feature>
<feature type="transmembrane region" description="Helical" evidence="1">
    <location>
        <begin position="57"/>
        <end position="77"/>
    </location>
</feature>
<feature type="topological domain" description="Cytoplasmic" evidence="1">
    <location>
        <begin position="78"/>
        <end position="125"/>
    </location>
</feature>
<feature type="transmembrane region" description="Helical" evidence="1">
    <location>
        <begin position="126"/>
        <end position="145"/>
    </location>
</feature>
<feature type="topological domain" description="Periplasmic" evidence="1">
    <location>
        <begin position="146"/>
        <end position="168"/>
    </location>
</feature>
<feature type="transmembrane region" description="Helical" evidence="1">
    <location>
        <begin position="169"/>
        <end position="190"/>
    </location>
</feature>
<feature type="topological domain" description="Cytoplasmic" evidence="1">
    <location>
        <begin position="191"/>
        <end position="220"/>
    </location>
</feature>
<feature type="transmembrane region" description="Helical" evidence="1">
    <location>
        <begin position="221"/>
        <end position="240"/>
    </location>
</feature>
<feature type="topological domain" description="Periplasmic" evidence="1">
    <location>
        <begin position="241"/>
        <end position="294"/>
    </location>
</feature>
<feature type="transmembrane region" description="Helical" evidence="1">
    <location>
        <begin position="295"/>
        <end position="316"/>
    </location>
</feature>
<feature type="topological domain" description="Cytoplasmic" evidence="1">
    <location>
        <begin position="317"/>
        <end position="321"/>
    </location>
</feature>
<sequence>MTTQTVSGRRYFTKAWLMEQKSLIALLVLIAIVSTLSPNFFTINNLFNILQQTSVNAIMAVGMTLVILTSGIDLSVGSLLALTGAVAASIVGIEVNALVAVAAALALGAAIGAVTGVIVAKGRVQAFIATLVMMLLLRGVTMVYTNGSPVNTGFTENADLFGWFGIGRPLGVPTPVWIMGIVFLAAWYMLHHTRLGRYIYALGGNEAATRLSGINVNKIKIIVYSLCGLLASLAGIIEVARLSSAQPTAGTGYELDAIAAVVLGGTSLAGGKGRIVGTLIGALILGFLNNGLNLLGVSSYYQMIVKAVVILLAVLVDNKKQ</sequence>
<accession>P0AGI2</accession>
<accession>P04984</accession>
<proteinExistence type="inferred from homology"/>
<protein>
    <recommendedName>
        <fullName evidence="1">Ribose import permease protein RbsC</fullName>
    </recommendedName>
</protein>
<comment type="function">
    <text evidence="1">Part of the ABC transporter complex RbsABC involved in ribose import. Probably responsible for the translocation of the substrate across the membrane.</text>
</comment>
<comment type="subunit">
    <text evidence="1">The complex is composed of an ATP-binding protein (RbsA), two transmembrane proteins (RbsC) and a solute-binding protein (RbsB).</text>
</comment>
<comment type="subcellular location">
    <subcellularLocation>
        <location evidence="1">Cell inner membrane</location>
        <topology evidence="1">Multi-pass membrane protein</topology>
    </subcellularLocation>
</comment>
<comment type="similarity">
    <text evidence="2">Belongs to the binding-protein-dependent transport system permease family. AraH/RbsC subfamily.</text>
</comment>
<keyword id="KW-0997">Cell inner membrane</keyword>
<keyword id="KW-1003">Cell membrane</keyword>
<keyword id="KW-0472">Membrane</keyword>
<keyword id="KW-1185">Reference proteome</keyword>
<keyword id="KW-0762">Sugar transport</keyword>
<keyword id="KW-0812">Transmembrane</keyword>
<keyword id="KW-1133">Transmembrane helix</keyword>
<keyword id="KW-0813">Transport</keyword>
<name>RBSC_ECOL6</name>
<gene>
    <name type="primary">rbsC</name>
    <name type="ordered locus">c4678</name>
</gene>
<organism>
    <name type="scientific">Escherichia coli O6:H1 (strain CFT073 / ATCC 700928 / UPEC)</name>
    <dbReference type="NCBI Taxonomy" id="199310"/>
    <lineage>
        <taxon>Bacteria</taxon>
        <taxon>Pseudomonadati</taxon>
        <taxon>Pseudomonadota</taxon>
        <taxon>Gammaproteobacteria</taxon>
        <taxon>Enterobacterales</taxon>
        <taxon>Enterobacteriaceae</taxon>
        <taxon>Escherichia</taxon>
    </lineage>
</organism>
<dbReference type="EMBL" id="AE014075">
    <property type="protein sequence ID" value="AAN83110.1"/>
    <property type="molecule type" value="Genomic_DNA"/>
</dbReference>
<dbReference type="RefSeq" id="WP_000211858.1">
    <property type="nucleotide sequence ID" value="NZ_CP051263.1"/>
</dbReference>
<dbReference type="STRING" id="199310.c4678"/>
<dbReference type="GeneID" id="93778199"/>
<dbReference type="KEGG" id="ecc:c4678"/>
<dbReference type="eggNOG" id="COG1172">
    <property type="taxonomic scope" value="Bacteria"/>
</dbReference>
<dbReference type="HOGENOM" id="CLU_028880_2_2_6"/>
<dbReference type="BioCyc" id="ECOL199310:C4678-MONOMER"/>
<dbReference type="Proteomes" id="UP000001410">
    <property type="component" value="Chromosome"/>
</dbReference>
<dbReference type="GO" id="GO:0005886">
    <property type="term" value="C:plasma membrane"/>
    <property type="evidence" value="ECO:0007669"/>
    <property type="project" value="UniProtKB-SubCell"/>
</dbReference>
<dbReference type="GO" id="GO:0022857">
    <property type="term" value="F:transmembrane transporter activity"/>
    <property type="evidence" value="ECO:0007669"/>
    <property type="project" value="InterPro"/>
</dbReference>
<dbReference type="CDD" id="cd06579">
    <property type="entry name" value="TM_PBP1_transp_AraH_like"/>
    <property type="match status" value="1"/>
</dbReference>
<dbReference type="InterPro" id="IPR001851">
    <property type="entry name" value="ABC_transp_permease"/>
</dbReference>
<dbReference type="NCBIfam" id="NF007067">
    <property type="entry name" value="PRK09512.1"/>
    <property type="match status" value="1"/>
</dbReference>
<dbReference type="PANTHER" id="PTHR32196:SF21">
    <property type="entry name" value="ABC TRANSPORTER PERMEASE PROTEIN YPHD-RELATED"/>
    <property type="match status" value="1"/>
</dbReference>
<dbReference type="PANTHER" id="PTHR32196">
    <property type="entry name" value="ABC TRANSPORTER PERMEASE PROTEIN YPHD-RELATED-RELATED"/>
    <property type="match status" value="1"/>
</dbReference>
<dbReference type="Pfam" id="PF02653">
    <property type="entry name" value="BPD_transp_2"/>
    <property type="match status" value="1"/>
</dbReference>